<proteinExistence type="inferred from homology"/>
<evidence type="ECO:0000255" key="1">
    <source>
        <dbReference type="HAMAP-Rule" id="MF_00818"/>
    </source>
</evidence>
<evidence type="ECO:0000256" key="2">
    <source>
        <dbReference type="SAM" id="MobiDB-lite"/>
    </source>
</evidence>
<protein>
    <recommendedName>
        <fullName evidence="1">NADPH-dependent 7-cyano-7-deazaguanine reductase</fullName>
        <ecNumber evidence="1">1.7.1.13</ecNumber>
    </recommendedName>
    <alternativeName>
        <fullName evidence="1">7-cyano-7-carbaguanine reductase</fullName>
    </alternativeName>
    <alternativeName>
        <fullName evidence="1">NADPH-dependent nitrile oxidoreductase</fullName>
    </alternativeName>
    <alternativeName>
        <fullName evidence="1">PreQ(0) reductase</fullName>
    </alternativeName>
</protein>
<keyword id="KW-0963">Cytoplasm</keyword>
<keyword id="KW-0521">NADP</keyword>
<keyword id="KW-0560">Oxidoreductase</keyword>
<keyword id="KW-0671">Queuosine biosynthesis</keyword>
<keyword id="KW-1185">Reference proteome</keyword>
<feature type="chain" id="PRO_0000163017" description="NADPH-dependent 7-cyano-7-deazaguanine reductase">
    <location>
        <begin position="1"/>
        <end position="147"/>
    </location>
</feature>
<feature type="region of interest" description="Disordered" evidence="2">
    <location>
        <begin position="1"/>
        <end position="23"/>
    </location>
</feature>
<feature type="active site" description="Thioimide intermediate" evidence="1">
    <location>
        <position position="46"/>
    </location>
</feature>
<feature type="active site" description="Proton donor" evidence="1">
    <location>
        <position position="53"/>
    </location>
</feature>
<feature type="binding site" evidence="1">
    <location>
        <begin position="68"/>
        <end position="70"/>
    </location>
    <ligand>
        <name>substrate</name>
    </ligand>
</feature>
<feature type="binding site" evidence="1">
    <location>
        <begin position="87"/>
        <end position="88"/>
    </location>
    <ligand>
        <name>substrate</name>
    </ligand>
</feature>
<dbReference type="EC" id="1.7.1.13" evidence="1"/>
<dbReference type="EMBL" id="AE008692">
    <property type="protein sequence ID" value="AAV88950.1"/>
    <property type="molecule type" value="Genomic_DNA"/>
</dbReference>
<dbReference type="RefSeq" id="WP_011240255.1">
    <property type="nucleotide sequence ID" value="NZ_CP035711.1"/>
</dbReference>
<dbReference type="SMR" id="Q5NQQ4"/>
<dbReference type="STRING" id="264203.ZMO0326"/>
<dbReference type="GeneID" id="79904461"/>
<dbReference type="KEGG" id="zmo:ZMO0326"/>
<dbReference type="eggNOG" id="COG0780">
    <property type="taxonomic scope" value="Bacteria"/>
</dbReference>
<dbReference type="HOGENOM" id="CLU_102489_0_1_5"/>
<dbReference type="UniPathway" id="UPA00392"/>
<dbReference type="Proteomes" id="UP000001173">
    <property type="component" value="Chromosome"/>
</dbReference>
<dbReference type="GO" id="GO:0005737">
    <property type="term" value="C:cytoplasm"/>
    <property type="evidence" value="ECO:0007669"/>
    <property type="project" value="UniProtKB-SubCell"/>
</dbReference>
<dbReference type="GO" id="GO:0033739">
    <property type="term" value="F:preQ1 synthase activity"/>
    <property type="evidence" value="ECO:0007669"/>
    <property type="project" value="UniProtKB-UniRule"/>
</dbReference>
<dbReference type="GO" id="GO:0008616">
    <property type="term" value="P:queuosine biosynthetic process"/>
    <property type="evidence" value="ECO:0007669"/>
    <property type="project" value="UniProtKB-UniRule"/>
</dbReference>
<dbReference type="GO" id="GO:0006400">
    <property type="term" value="P:tRNA modification"/>
    <property type="evidence" value="ECO:0007669"/>
    <property type="project" value="UniProtKB-UniRule"/>
</dbReference>
<dbReference type="Gene3D" id="3.30.1130.10">
    <property type="match status" value="1"/>
</dbReference>
<dbReference type="HAMAP" id="MF_00818">
    <property type="entry name" value="QueF_type1"/>
    <property type="match status" value="1"/>
</dbReference>
<dbReference type="InterPro" id="IPR043133">
    <property type="entry name" value="GTP-CH-I_C/QueF"/>
</dbReference>
<dbReference type="InterPro" id="IPR050084">
    <property type="entry name" value="NADPH_dep_7-cyano-7-deazaG_red"/>
</dbReference>
<dbReference type="InterPro" id="IPR029500">
    <property type="entry name" value="QueF"/>
</dbReference>
<dbReference type="InterPro" id="IPR016856">
    <property type="entry name" value="QueF_type1"/>
</dbReference>
<dbReference type="NCBIfam" id="TIGR03139">
    <property type="entry name" value="QueF-II"/>
    <property type="match status" value="1"/>
</dbReference>
<dbReference type="PANTHER" id="PTHR34354">
    <property type="entry name" value="NADPH-DEPENDENT 7-CYANO-7-DEAZAGUANINE REDUCTASE"/>
    <property type="match status" value="1"/>
</dbReference>
<dbReference type="PANTHER" id="PTHR34354:SF1">
    <property type="entry name" value="NADPH-DEPENDENT 7-CYANO-7-DEAZAGUANINE REDUCTASE"/>
    <property type="match status" value="1"/>
</dbReference>
<dbReference type="Pfam" id="PF14489">
    <property type="entry name" value="QueF"/>
    <property type="match status" value="1"/>
</dbReference>
<dbReference type="PIRSF" id="PIRSF027377">
    <property type="entry name" value="Nitrile_oxidored_QueF"/>
    <property type="match status" value="1"/>
</dbReference>
<dbReference type="SUPFAM" id="SSF55620">
    <property type="entry name" value="Tetrahydrobiopterin biosynthesis enzymes-like"/>
    <property type="match status" value="1"/>
</dbReference>
<name>QUEF_ZYMMO</name>
<accession>Q5NQQ4</accession>
<comment type="function">
    <text evidence="1">Catalyzes the NADPH-dependent reduction of 7-cyano-7-deazaguanine (preQ0) to 7-aminomethyl-7-deazaguanine (preQ1).</text>
</comment>
<comment type="catalytic activity">
    <reaction evidence="1">
        <text>7-aminomethyl-7-carbaguanine + 2 NADP(+) = 7-cyano-7-deazaguanine + 2 NADPH + 3 H(+)</text>
        <dbReference type="Rhea" id="RHEA:13409"/>
        <dbReference type="ChEBI" id="CHEBI:15378"/>
        <dbReference type="ChEBI" id="CHEBI:45075"/>
        <dbReference type="ChEBI" id="CHEBI:57783"/>
        <dbReference type="ChEBI" id="CHEBI:58349"/>
        <dbReference type="ChEBI" id="CHEBI:58703"/>
        <dbReference type="EC" id="1.7.1.13"/>
    </reaction>
</comment>
<comment type="pathway">
    <text evidence="1">tRNA modification; tRNA-queuosine biosynthesis.</text>
</comment>
<comment type="subcellular location">
    <subcellularLocation>
        <location evidence="1">Cytoplasm</location>
    </subcellularLocation>
</comment>
<comment type="similarity">
    <text evidence="1">Belongs to the GTP cyclohydrolase I family. QueF type 1 subfamily.</text>
</comment>
<sequence length="147" mass="16671">MQTTHLGKNSPIPQSPEEASLDYVPNPRQGKNYLIRFAIPEFTSLCPVTGQPDFAHLVIDYVPDKLIVESKSLKLFLGSFRNHRAFHEDCTVGIGEKLFTEMKAQWLRIGGYWYPRGGIPIDVFWQSGAAPQDVWLPEQGVPPYRGR</sequence>
<organism>
    <name type="scientific">Zymomonas mobilis subsp. mobilis (strain ATCC 31821 / ZM4 / CP4)</name>
    <dbReference type="NCBI Taxonomy" id="264203"/>
    <lineage>
        <taxon>Bacteria</taxon>
        <taxon>Pseudomonadati</taxon>
        <taxon>Pseudomonadota</taxon>
        <taxon>Alphaproteobacteria</taxon>
        <taxon>Sphingomonadales</taxon>
        <taxon>Zymomonadaceae</taxon>
        <taxon>Zymomonas</taxon>
    </lineage>
</organism>
<gene>
    <name evidence="1" type="primary">queF</name>
    <name type="ordered locus">ZMO0326</name>
</gene>
<reference key="1">
    <citation type="journal article" date="2005" name="Nat. Biotechnol.">
        <title>The genome sequence of the ethanologenic bacterium Zymomonas mobilis ZM4.</title>
        <authorList>
            <person name="Seo J.-S."/>
            <person name="Chong H."/>
            <person name="Park H.S."/>
            <person name="Yoon K.-O."/>
            <person name="Jung C."/>
            <person name="Kim J.J."/>
            <person name="Hong J.H."/>
            <person name="Kim H."/>
            <person name="Kim J.-H."/>
            <person name="Kil J.-I."/>
            <person name="Park C.J."/>
            <person name="Oh H.-M."/>
            <person name="Lee J.-S."/>
            <person name="Jin S.-J."/>
            <person name="Um H.-W."/>
            <person name="Lee H.-J."/>
            <person name="Oh S.-J."/>
            <person name="Kim J.Y."/>
            <person name="Kang H.L."/>
            <person name="Lee S.Y."/>
            <person name="Lee K.J."/>
            <person name="Kang H.S."/>
        </authorList>
    </citation>
    <scope>NUCLEOTIDE SEQUENCE [LARGE SCALE GENOMIC DNA]</scope>
    <source>
        <strain>ATCC 31821 / ZM4 / CP4</strain>
    </source>
</reference>